<accession>A0A1W6EVM7</accession>
<accession>A0A2L0HGV0</accession>
<feature type="signal peptide" evidence="1">
    <location>
        <begin position="1"/>
        <end position="26"/>
    </location>
</feature>
<feature type="peptide" id="PRO_0000444895" description="Ampulexin 1" evidence="1">
    <location>
        <begin position="27"/>
        <end position="50"/>
    </location>
</feature>
<feature type="sequence conflict" description="In Ref. 2; AUX80731." evidence="3" ref="2">
    <original>I</original>
    <variation>T</variation>
    <location>
        <position position="16"/>
    </location>
</feature>
<proteinExistence type="evidence at protein level"/>
<reference evidence="3" key="1">
    <citation type="journal article" date="2018" name="Biochemistry">
        <title>Ampulexins: A New Family of Peptides in Venom of the Emerald Jewel Wasp, Ampulex compressa.</title>
        <authorList>
            <person name="Moore E.L."/>
            <person name="Arvidson R."/>
            <person name="Banks C."/>
            <person name="Urenda J.P."/>
            <person name="Duong E."/>
            <person name="Mohammed H."/>
            <person name="Adams M.E."/>
        </authorList>
    </citation>
    <scope>NUCLEOTIDE SEQUENCE [MRNA]</scope>
    <scope>PROTEIN SEQUENCE OF 27-50</scope>
    <scope>FUNCTION</scope>
    <scope>SUBUNIT</scope>
    <scope>SUBCELLULAR LOCATION</scope>
    <scope>TISSUE SPECIFICITY</scope>
    <scope>MASS SPECTROMETRY</scope>
    <source>
        <tissue evidence="2">Venom</tissue>
        <tissue evidence="2">Venom gland</tissue>
    </source>
</reference>
<reference evidence="5" key="2">
    <citation type="submission" date="2017-09" db="EMBL/GenBank/DDBJ databases">
        <authorList>
            <person name="Ehlers B."/>
            <person name="Leendertz F.H."/>
        </authorList>
    </citation>
    <scope>NUCLEOTIDE SEQUENCE [MRNA]</scope>
</reference>
<name>AMPU1_AMPCP</name>
<organism evidence="4">
    <name type="scientific">Ampulex compressa</name>
    <name type="common">Emerald cockroach wasp</name>
    <dbReference type="NCBI Taxonomy" id="860918"/>
    <lineage>
        <taxon>Eukaryota</taxon>
        <taxon>Metazoa</taxon>
        <taxon>Ecdysozoa</taxon>
        <taxon>Arthropoda</taxon>
        <taxon>Hexapoda</taxon>
        <taxon>Insecta</taxon>
        <taxon>Pterygota</taxon>
        <taxon>Neoptera</taxon>
        <taxon>Endopterygota</taxon>
        <taxon>Hymenoptera</taxon>
        <taxon>Apocrita</taxon>
        <taxon>Aculeata</taxon>
        <taxon>Apoidea</taxon>
        <taxon>Ampulicidae</taxon>
        <taxon>Ampulicini</taxon>
        <taxon>Ampulex</taxon>
    </lineage>
</organism>
<comment type="function">
    <text evidence="1">Amphipathic peptide which probably adopts an alpha-helical structure. When injected in subesophageal ganglia of cockroach P.americana, a natural host for larvae of A.compressa, dampens the escape response for about 1 hour which may contribute to early stages of hypokinesia. Has no antimicrobial activity against E.coli DH5alpha or B.thuringiensis. Is not cytotoxic in vitro.</text>
</comment>
<comment type="subunit">
    <text evidence="1">Monomer.</text>
</comment>
<comment type="subcellular location">
    <subcellularLocation>
        <location evidence="1">Secreted</location>
    </subcellularLocation>
</comment>
<comment type="tissue specificity">
    <text evidence="1">Expressed in venom sac and, to a lesser extent, in venom gland. Not expressed in brain.</text>
</comment>
<comment type="mass spectrometry" mass="2847.0" method="MALDI" evidence="1"/>
<sequence length="50" mass="5677">MKAIMVLFYVMMLTIIASVSMVNGSPGKDDYVNPKEQLGYDILEKLRQKP</sequence>
<dbReference type="EMBL" id="MF804414">
    <property type="protein sequence ID" value="AUX80731.1"/>
    <property type="molecule type" value="mRNA"/>
</dbReference>
<dbReference type="EMBL" id="KY563374">
    <property type="protein sequence ID" value="ARK19783.1"/>
    <property type="molecule type" value="mRNA"/>
</dbReference>
<dbReference type="SMR" id="A0A1W6EVM7"/>
<dbReference type="GO" id="GO:0005576">
    <property type="term" value="C:extracellular region"/>
    <property type="evidence" value="ECO:0007669"/>
    <property type="project" value="UniProtKB-SubCell"/>
</dbReference>
<keyword id="KW-0903">Direct protein sequencing</keyword>
<keyword id="KW-0964">Secreted</keyword>
<keyword id="KW-0732">Signal</keyword>
<protein>
    <recommendedName>
        <fullName evidence="2">Ampulexin 1</fullName>
        <shortName evidence="2">Axn1</shortName>
    </recommendedName>
</protein>
<evidence type="ECO:0000269" key="1">
    <source>
    </source>
</evidence>
<evidence type="ECO:0000303" key="2">
    <source>
    </source>
</evidence>
<evidence type="ECO:0000305" key="3"/>
<evidence type="ECO:0000312" key="4">
    <source>
        <dbReference type="EMBL" id="ARK19783.1"/>
    </source>
</evidence>
<evidence type="ECO:0000312" key="5">
    <source>
        <dbReference type="EMBL" id="AUX80731.1"/>
    </source>
</evidence>